<comment type="function">
    <text evidence="1">Allows the formation of correctly charged Asn-tRNA(Asn) or Gln-tRNA(Gln) through the transamidation of misacylated Asp-tRNA(Asn) or Glu-tRNA(Gln) in organisms which lack either or both of asparaginyl-tRNA or glutaminyl-tRNA synthetases. The reaction takes place in the presence of glutamine and ATP through an activated phospho-Asp-tRNA(Asn) or phospho-Glu-tRNA(Gln).</text>
</comment>
<comment type="catalytic activity">
    <reaction evidence="1">
        <text>L-glutamyl-tRNA(Gln) + L-glutamine + ATP + H2O = L-glutaminyl-tRNA(Gln) + L-glutamate + ADP + phosphate + H(+)</text>
        <dbReference type="Rhea" id="RHEA:17521"/>
        <dbReference type="Rhea" id="RHEA-COMP:9681"/>
        <dbReference type="Rhea" id="RHEA-COMP:9684"/>
        <dbReference type="ChEBI" id="CHEBI:15377"/>
        <dbReference type="ChEBI" id="CHEBI:15378"/>
        <dbReference type="ChEBI" id="CHEBI:29985"/>
        <dbReference type="ChEBI" id="CHEBI:30616"/>
        <dbReference type="ChEBI" id="CHEBI:43474"/>
        <dbReference type="ChEBI" id="CHEBI:58359"/>
        <dbReference type="ChEBI" id="CHEBI:78520"/>
        <dbReference type="ChEBI" id="CHEBI:78521"/>
        <dbReference type="ChEBI" id="CHEBI:456216"/>
    </reaction>
</comment>
<comment type="catalytic activity">
    <reaction evidence="1">
        <text>L-aspartyl-tRNA(Asn) + L-glutamine + ATP + H2O = L-asparaginyl-tRNA(Asn) + L-glutamate + ADP + phosphate + 2 H(+)</text>
        <dbReference type="Rhea" id="RHEA:14513"/>
        <dbReference type="Rhea" id="RHEA-COMP:9674"/>
        <dbReference type="Rhea" id="RHEA-COMP:9677"/>
        <dbReference type="ChEBI" id="CHEBI:15377"/>
        <dbReference type="ChEBI" id="CHEBI:15378"/>
        <dbReference type="ChEBI" id="CHEBI:29985"/>
        <dbReference type="ChEBI" id="CHEBI:30616"/>
        <dbReference type="ChEBI" id="CHEBI:43474"/>
        <dbReference type="ChEBI" id="CHEBI:58359"/>
        <dbReference type="ChEBI" id="CHEBI:78515"/>
        <dbReference type="ChEBI" id="CHEBI:78516"/>
        <dbReference type="ChEBI" id="CHEBI:456216"/>
    </reaction>
</comment>
<comment type="subunit">
    <text evidence="1">Heterotrimer of A, B and C subunits.</text>
</comment>
<comment type="similarity">
    <text evidence="1">Belongs to the GatB/GatE family. GatB subfamily.</text>
</comment>
<accession>Q31F54</accession>
<organism>
    <name type="scientific">Hydrogenovibrio crunogenus (strain DSM 25203 / XCL-2)</name>
    <name type="common">Thiomicrospira crunogena</name>
    <dbReference type="NCBI Taxonomy" id="317025"/>
    <lineage>
        <taxon>Bacteria</taxon>
        <taxon>Pseudomonadati</taxon>
        <taxon>Pseudomonadota</taxon>
        <taxon>Gammaproteobacteria</taxon>
        <taxon>Thiotrichales</taxon>
        <taxon>Piscirickettsiaceae</taxon>
        <taxon>Hydrogenovibrio</taxon>
    </lineage>
</organism>
<reference key="1">
    <citation type="journal article" date="2006" name="PLoS Biol.">
        <title>The genome of deep-sea vent chemolithoautotroph Thiomicrospira crunogena XCL-2.</title>
        <authorList>
            <person name="Scott K.M."/>
            <person name="Sievert S.M."/>
            <person name="Abril F.N."/>
            <person name="Ball L.A."/>
            <person name="Barrett C.J."/>
            <person name="Blake R.A."/>
            <person name="Boller A.J."/>
            <person name="Chain P.S.G."/>
            <person name="Clark J.A."/>
            <person name="Davis C.R."/>
            <person name="Detter C."/>
            <person name="Do K.F."/>
            <person name="Dobrinski K.P."/>
            <person name="Faza B.I."/>
            <person name="Fitzpatrick K.A."/>
            <person name="Freyermuth S.K."/>
            <person name="Harmer T.L."/>
            <person name="Hauser L.J."/>
            <person name="Huegler M."/>
            <person name="Kerfeld C.A."/>
            <person name="Klotz M.G."/>
            <person name="Kong W.W."/>
            <person name="Land M."/>
            <person name="Lapidus A."/>
            <person name="Larimer F.W."/>
            <person name="Longo D.L."/>
            <person name="Lucas S."/>
            <person name="Malfatti S.A."/>
            <person name="Massey S.E."/>
            <person name="Martin D.D."/>
            <person name="McCuddin Z."/>
            <person name="Meyer F."/>
            <person name="Moore J.L."/>
            <person name="Ocampo L.H. Jr."/>
            <person name="Paul J.H."/>
            <person name="Paulsen I.T."/>
            <person name="Reep D.K."/>
            <person name="Ren Q."/>
            <person name="Ross R.L."/>
            <person name="Sato P.Y."/>
            <person name="Thomas P."/>
            <person name="Tinkham L.E."/>
            <person name="Zeruth G.T."/>
        </authorList>
    </citation>
    <scope>NUCLEOTIDE SEQUENCE [LARGE SCALE GENOMIC DNA]</scope>
    <source>
        <strain>DSM 25203 / XCL-2</strain>
    </source>
</reference>
<sequence>MTWEVVIGLEIHAQLTTKTKIFSGSSIDYGAAPNTQANLLDLGMPGQLPVLNKAVIPKAIKLGLALGAKIGRRSVFDRKNYFYPDLPKGYQTSQFSFPIVDTGGVVEIEVDGEIKKIGVTRAHLEEDAGKSIHDAFPGQTGIDLNRAGTPLLEIVSEPDMRSAKEAVAYAKKMHELVQYLGICDGNMQEGSFRVDSNVSIHKPGTPFGTRAELKNINSFKFIEQAIELEIERQIEVLESGGKVVQETRLYDADKNETRSMREKEEANDYRYFPCPDLLPVVITEEDIEAIRAEMPEMPDAKRKRYVADFGLSDYDAAFLTGSRAMAEYFEAVVAKTNEAKVSANWVMGELSKSLNQKGIDISESPVSADMLAGLIERIQDNTISGKIAKQVFDGMWSGEGSADEIIEQKGLKQITDSSAIEALVNDVLANNAAQVEAYKGGQEKMFGFFVGQVMKASQGQANPAQVNQVLKDKLK</sequence>
<proteinExistence type="inferred from homology"/>
<feature type="chain" id="PRO_0000241296" description="Aspartyl/glutamyl-tRNA(Asn/Gln) amidotransferase subunit B">
    <location>
        <begin position="1"/>
        <end position="475"/>
    </location>
</feature>
<name>GATB_HYDCU</name>
<protein>
    <recommendedName>
        <fullName evidence="1">Aspartyl/glutamyl-tRNA(Asn/Gln) amidotransferase subunit B</fullName>
        <shortName evidence="1">Asp/Glu-ADT subunit B</shortName>
        <ecNumber evidence="1">6.3.5.-</ecNumber>
    </recommendedName>
</protein>
<gene>
    <name evidence="1" type="primary">gatB</name>
    <name type="ordered locus">Tcr_1627</name>
</gene>
<dbReference type="EC" id="6.3.5.-" evidence="1"/>
<dbReference type="EMBL" id="CP000109">
    <property type="protein sequence ID" value="ABB42219.1"/>
    <property type="molecule type" value="Genomic_DNA"/>
</dbReference>
<dbReference type="SMR" id="Q31F54"/>
<dbReference type="STRING" id="317025.Tcr_1627"/>
<dbReference type="KEGG" id="tcx:Tcr_1627"/>
<dbReference type="eggNOG" id="COG0064">
    <property type="taxonomic scope" value="Bacteria"/>
</dbReference>
<dbReference type="HOGENOM" id="CLU_019240_0_0_6"/>
<dbReference type="OrthoDB" id="9804078at2"/>
<dbReference type="GO" id="GO:0050566">
    <property type="term" value="F:asparaginyl-tRNA synthase (glutamine-hydrolyzing) activity"/>
    <property type="evidence" value="ECO:0007669"/>
    <property type="project" value="RHEA"/>
</dbReference>
<dbReference type="GO" id="GO:0005524">
    <property type="term" value="F:ATP binding"/>
    <property type="evidence" value="ECO:0007669"/>
    <property type="project" value="UniProtKB-KW"/>
</dbReference>
<dbReference type="GO" id="GO:0050567">
    <property type="term" value="F:glutaminyl-tRNA synthase (glutamine-hydrolyzing) activity"/>
    <property type="evidence" value="ECO:0007669"/>
    <property type="project" value="UniProtKB-UniRule"/>
</dbReference>
<dbReference type="GO" id="GO:0070681">
    <property type="term" value="P:glutaminyl-tRNAGln biosynthesis via transamidation"/>
    <property type="evidence" value="ECO:0007669"/>
    <property type="project" value="TreeGrafter"/>
</dbReference>
<dbReference type="GO" id="GO:0006412">
    <property type="term" value="P:translation"/>
    <property type="evidence" value="ECO:0007669"/>
    <property type="project" value="UniProtKB-UniRule"/>
</dbReference>
<dbReference type="FunFam" id="1.10.10.410:FF:000001">
    <property type="entry name" value="Aspartyl/glutamyl-tRNA(Asn/Gln) amidotransferase subunit B"/>
    <property type="match status" value="1"/>
</dbReference>
<dbReference type="FunFam" id="1.10.150.380:FF:000001">
    <property type="entry name" value="Aspartyl/glutamyl-tRNA(Asn/Gln) amidotransferase subunit B"/>
    <property type="match status" value="1"/>
</dbReference>
<dbReference type="Gene3D" id="1.10.10.410">
    <property type="match status" value="1"/>
</dbReference>
<dbReference type="Gene3D" id="1.10.150.380">
    <property type="entry name" value="GatB domain, N-terminal subdomain"/>
    <property type="match status" value="1"/>
</dbReference>
<dbReference type="HAMAP" id="MF_00121">
    <property type="entry name" value="GatB"/>
    <property type="match status" value="1"/>
</dbReference>
<dbReference type="InterPro" id="IPR017959">
    <property type="entry name" value="Asn/Gln-tRNA_amidoTrfase_suB/E"/>
</dbReference>
<dbReference type="InterPro" id="IPR006075">
    <property type="entry name" value="Asn/Gln-tRNA_Trfase_suB/E_cat"/>
</dbReference>
<dbReference type="InterPro" id="IPR018027">
    <property type="entry name" value="Asn/Gln_amidotransferase"/>
</dbReference>
<dbReference type="InterPro" id="IPR003789">
    <property type="entry name" value="Asn/Gln_tRNA_amidoTrase-B-like"/>
</dbReference>
<dbReference type="InterPro" id="IPR004413">
    <property type="entry name" value="GatB"/>
</dbReference>
<dbReference type="InterPro" id="IPR042114">
    <property type="entry name" value="GatB_C_1"/>
</dbReference>
<dbReference type="InterPro" id="IPR023168">
    <property type="entry name" value="GatB_Yqey_C_2"/>
</dbReference>
<dbReference type="InterPro" id="IPR017958">
    <property type="entry name" value="Gln-tRNA_amidoTrfase_suB_CS"/>
</dbReference>
<dbReference type="InterPro" id="IPR014746">
    <property type="entry name" value="Gln_synth/guanido_kin_cat_dom"/>
</dbReference>
<dbReference type="NCBIfam" id="TIGR00133">
    <property type="entry name" value="gatB"/>
    <property type="match status" value="1"/>
</dbReference>
<dbReference type="NCBIfam" id="NF004012">
    <property type="entry name" value="PRK05477.1-2"/>
    <property type="match status" value="1"/>
</dbReference>
<dbReference type="NCBIfam" id="NF004014">
    <property type="entry name" value="PRK05477.1-4"/>
    <property type="match status" value="1"/>
</dbReference>
<dbReference type="NCBIfam" id="NF004015">
    <property type="entry name" value="PRK05477.1-5"/>
    <property type="match status" value="1"/>
</dbReference>
<dbReference type="PANTHER" id="PTHR11659">
    <property type="entry name" value="GLUTAMYL-TRNA GLN AMIDOTRANSFERASE SUBUNIT B MITOCHONDRIAL AND PROKARYOTIC PET112-RELATED"/>
    <property type="match status" value="1"/>
</dbReference>
<dbReference type="PANTHER" id="PTHR11659:SF0">
    <property type="entry name" value="GLUTAMYL-TRNA(GLN) AMIDOTRANSFERASE SUBUNIT B, MITOCHONDRIAL"/>
    <property type="match status" value="1"/>
</dbReference>
<dbReference type="Pfam" id="PF02934">
    <property type="entry name" value="GatB_N"/>
    <property type="match status" value="1"/>
</dbReference>
<dbReference type="Pfam" id="PF02637">
    <property type="entry name" value="GatB_Yqey"/>
    <property type="match status" value="1"/>
</dbReference>
<dbReference type="SMART" id="SM00845">
    <property type="entry name" value="GatB_Yqey"/>
    <property type="match status" value="1"/>
</dbReference>
<dbReference type="SUPFAM" id="SSF89095">
    <property type="entry name" value="GatB/YqeY motif"/>
    <property type="match status" value="1"/>
</dbReference>
<dbReference type="SUPFAM" id="SSF55931">
    <property type="entry name" value="Glutamine synthetase/guanido kinase"/>
    <property type="match status" value="1"/>
</dbReference>
<dbReference type="PROSITE" id="PS01234">
    <property type="entry name" value="GATB"/>
    <property type="match status" value="1"/>
</dbReference>
<keyword id="KW-0067">ATP-binding</keyword>
<keyword id="KW-0436">Ligase</keyword>
<keyword id="KW-0547">Nucleotide-binding</keyword>
<keyword id="KW-0648">Protein biosynthesis</keyword>
<evidence type="ECO:0000255" key="1">
    <source>
        <dbReference type="HAMAP-Rule" id="MF_00121"/>
    </source>
</evidence>